<sequence>MAKKKEVVRVAKLQFNAGQAKPGPELAGLGIVMPEFTKQFNDATRERSGEPVPVQIIVYKDKSFDFKLFTAPTSFMLKKAAGIKSGSANSKTTIVATIKKSQLEDIAKYKMPDLNTKNLEEAMHTIAGTARNMGILVEGYDDIVKAREEAKLAAKEAASAAAFEAKLESDAAQLLAENKQSAEVEVIKEKDKGNKDE</sequence>
<organism>
    <name type="scientific">Mycoplasma mobile (strain ATCC 43663 / 163K / NCTC 11711)</name>
    <name type="common">Mesomycoplasma mobile</name>
    <dbReference type="NCBI Taxonomy" id="267748"/>
    <lineage>
        <taxon>Bacteria</taxon>
        <taxon>Bacillati</taxon>
        <taxon>Mycoplasmatota</taxon>
        <taxon>Mycoplasmoidales</taxon>
        <taxon>Metamycoplasmataceae</taxon>
        <taxon>Mesomycoplasma</taxon>
    </lineage>
</organism>
<protein>
    <recommendedName>
        <fullName evidence="1">Large ribosomal subunit protein uL11</fullName>
    </recommendedName>
    <alternativeName>
        <fullName evidence="2">50S ribosomal protein L11</fullName>
    </alternativeName>
</protein>
<comment type="function">
    <text evidence="1">Forms part of the ribosomal stalk which helps the ribosome interact with GTP-bound translation factors.</text>
</comment>
<comment type="subunit">
    <text evidence="1">Part of the ribosomal stalk of the 50S ribosomal subunit. Interacts with L10 and the large rRNA to form the base of the stalk. L10 forms an elongated spine to which L12 dimers bind in a sequential fashion forming a multimeric L10(L12)X complex.</text>
</comment>
<comment type="PTM">
    <text evidence="1">One or more lysine residues are methylated.</text>
</comment>
<comment type="similarity">
    <text evidence="1">Belongs to the universal ribosomal protein uL11 family.</text>
</comment>
<comment type="sequence caution" evidence="2">
    <conflict type="erroneous initiation">
        <sequence resource="EMBL-CDS" id="AAT27626"/>
    </conflict>
</comment>
<reference key="1">
    <citation type="journal article" date="2004" name="Genome Res.">
        <title>The complete genome and proteome of Mycoplasma mobile.</title>
        <authorList>
            <person name="Jaffe J.D."/>
            <person name="Stange-Thomann N."/>
            <person name="Smith C."/>
            <person name="DeCaprio D."/>
            <person name="Fisher S."/>
            <person name="Butler J."/>
            <person name="Calvo S."/>
            <person name="Elkins T."/>
            <person name="FitzGerald M.G."/>
            <person name="Hafez N."/>
            <person name="Kodira C.D."/>
            <person name="Major J."/>
            <person name="Wang S."/>
            <person name="Wilkinson J."/>
            <person name="Nicol R."/>
            <person name="Nusbaum C."/>
            <person name="Birren B."/>
            <person name="Berg H.C."/>
            <person name="Church G.M."/>
        </authorList>
    </citation>
    <scope>NUCLEOTIDE SEQUENCE [LARGE SCALE GENOMIC DNA]</scope>
    <source>
        <strain>ATCC 43663 / NCTC 11711 / 163 K</strain>
    </source>
</reference>
<gene>
    <name evidence="1" type="primary">rplK</name>
    <name type="ordered locus">MMOB1400</name>
</gene>
<proteinExistence type="inferred from homology"/>
<feature type="chain" id="PRO_0000104319" description="Large ribosomal subunit protein uL11">
    <location>
        <begin position="1"/>
        <end position="197"/>
    </location>
</feature>
<keyword id="KW-0488">Methylation</keyword>
<keyword id="KW-1185">Reference proteome</keyword>
<keyword id="KW-0687">Ribonucleoprotein</keyword>
<keyword id="KW-0689">Ribosomal protein</keyword>
<keyword id="KW-0694">RNA-binding</keyword>
<keyword id="KW-0699">rRNA-binding</keyword>
<dbReference type="EMBL" id="AE017308">
    <property type="protein sequence ID" value="AAT27626.1"/>
    <property type="status" value="ALT_INIT"/>
    <property type="molecule type" value="Genomic_DNA"/>
</dbReference>
<dbReference type="RefSeq" id="WP_011264660.1">
    <property type="nucleotide sequence ID" value="NC_006908.1"/>
</dbReference>
<dbReference type="SMR" id="Q6KIF0"/>
<dbReference type="STRING" id="267748.MMOB1400"/>
<dbReference type="KEGG" id="mmo:MMOB1400"/>
<dbReference type="eggNOG" id="COG0080">
    <property type="taxonomic scope" value="Bacteria"/>
</dbReference>
<dbReference type="HOGENOM" id="CLU_074237_2_2_14"/>
<dbReference type="OrthoDB" id="9802408at2"/>
<dbReference type="Proteomes" id="UP000009072">
    <property type="component" value="Chromosome"/>
</dbReference>
<dbReference type="GO" id="GO:0022625">
    <property type="term" value="C:cytosolic large ribosomal subunit"/>
    <property type="evidence" value="ECO:0007669"/>
    <property type="project" value="TreeGrafter"/>
</dbReference>
<dbReference type="GO" id="GO:0070180">
    <property type="term" value="F:large ribosomal subunit rRNA binding"/>
    <property type="evidence" value="ECO:0007669"/>
    <property type="project" value="UniProtKB-UniRule"/>
</dbReference>
<dbReference type="GO" id="GO:0003735">
    <property type="term" value="F:structural constituent of ribosome"/>
    <property type="evidence" value="ECO:0007669"/>
    <property type="project" value="InterPro"/>
</dbReference>
<dbReference type="GO" id="GO:0006412">
    <property type="term" value="P:translation"/>
    <property type="evidence" value="ECO:0007669"/>
    <property type="project" value="UniProtKB-UniRule"/>
</dbReference>
<dbReference type="CDD" id="cd00349">
    <property type="entry name" value="Ribosomal_L11"/>
    <property type="match status" value="1"/>
</dbReference>
<dbReference type="FunFam" id="1.10.10.250:FF:000001">
    <property type="entry name" value="50S ribosomal protein L11"/>
    <property type="match status" value="1"/>
</dbReference>
<dbReference type="Gene3D" id="1.10.10.250">
    <property type="entry name" value="Ribosomal protein L11, C-terminal domain"/>
    <property type="match status" value="1"/>
</dbReference>
<dbReference type="Gene3D" id="3.30.1550.10">
    <property type="entry name" value="Ribosomal protein L11/L12, N-terminal domain"/>
    <property type="match status" value="1"/>
</dbReference>
<dbReference type="HAMAP" id="MF_00736">
    <property type="entry name" value="Ribosomal_uL11"/>
    <property type="match status" value="1"/>
</dbReference>
<dbReference type="InterPro" id="IPR000911">
    <property type="entry name" value="Ribosomal_uL11"/>
</dbReference>
<dbReference type="InterPro" id="IPR006519">
    <property type="entry name" value="Ribosomal_uL11_bac-typ"/>
</dbReference>
<dbReference type="InterPro" id="IPR020783">
    <property type="entry name" value="Ribosomal_uL11_C"/>
</dbReference>
<dbReference type="InterPro" id="IPR036769">
    <property type="entry name" value="Ribosomal_uL11_C_sf"/>
</dbReference>
<dbReference type="InterPro" id="IPR020784">
    <property type="entry name" value="Ribosomal_uL11_N"/>
</dbReference>
<dbReference type="InterPro" id="IPR036796">
    <property type="entry name" value="Ribosomal_uL11_N_sf"/>
</dbReference>
<dbReference type="NCBIfam" id="TIGR01632">
    <property type="entry name" value="L11_bact"/>
    <property type="match status" value="1"/>
</dbReference>
<dbReference type="NCBIfam" id="NF011111">
    <property type="entry name" value="PRK14539.1"/>
    <property type="match status" value="1"/>
</dbReference>
<dbReference type="PANTHER" id="PTHR11661">
    <property type="entry name" value="60S RIBOSOMAL PROTEIN L12"/>
    <property type="match status" value="1"/>
</dbReference>
<dbReference type="PANTHER" id="PTHR11661:SF1">
    <property type="entry name" value="LARGE RIBOSOMAL SUBUNIT PROTEIN UL11M"/>
    <property type="match status" value="1"/>
</dbReference>
<dbReference type="Pfam" id="PF00298">
    <property type="entry name" value="Ribosomal_L11"/>
    <property type="match status" value="1"/>
</dbReference>
<dbReference type="Pfam" id="PF03946">
    <property type="entry name" value="Ribosomal_L11_N"/>
    <property type="match status" value="1"/>
</dbReference>
<dbReference type="SMART" id="SM00649">
    <property type="entry name" value="RL11"/>
    <property type="match status" value="1"/>
</dbReference>
<dbReference type="SUPFAM" id="SSF54747">
    <property type="entry name" value="Ribosomal L11/L12e N-terminal domain"/>
    <property type="match status" value="1"/>
</dbReference>
<dbReference type="SUPFAM" id="SSF46906">
    <property type="entry name" value="Ribosomal protein L11, C-terminal domain"/>
    <property type="match status" value="1"/>
</dbReference>
<accession>Q6KIF0</accession>
<name>RL11_MYCM1</name>
<evidence type="ECO:0000255" key="1">
    <source>
        <dbReference type="HAMAP-Rule" id="MF_00736"/>
    </source>
</evidence>
<evidence type="ECO:0000305" key="2"/>